<proteinExistence type="inferred from homology"/>
<sequence length="182" mass="20997">RFKKIRRLGALPGLTSKRPRSGSDPKNQLRSGKRSQYRIRLEEKQKLRFHYGLTERQLLKYVHIAGKAKGSTGQVLLQLLEMRLDNILFRLGMASTIPGARQLVNHRHILVNGRIVDIPSYRCKPRDIITTKDKQRSKALIQNYIASSPHEELPNHLTIDPFQYKGLVNQIIDSKWIGLKIN</sequence>
<accession>O20235</accession>
<organism>
    <name type="scientific">Iris lutescens</name>
    <name type="common">Crimean iris</name>
    <name type="synonym">Iris italica</name>
    <dbReference type="NCBI Taxonomy" id="58956"/>
    <lineage>
        <taxon>Eukaryota</taxon>
        <taxon>Viridiplantae</taxon>
        <taxon>Streptophyta</taxon>
        <taxon>Embryophyta</taxon>
        <taxon>Tracheophyta</taxon>
        <taxon>Spermatophyta</taxon>
        <taxon>Magnoliopsida</taxon>
        <taxon>Liliopsida</taxon>
        <taxon>Asparagales</taxon>
        <taxon>Iridaceae</taxon>
        <taxon>Iridoideae</taxon>
        <taxon>Irideae</taxon>
        <taxon>Iris</taxon>
    </lineage>
</organism>
<feature type="chain" id="PRO_0000132611" description="Small ribosomal subunit protein uS4c">
    <location>
        <begin position="1" status="less than"/>
        <end position="182" status="greater than"/>
    </location>
</feature>
<feature type="domain" description="S4 RNA-binding">
    <location>
        <begin position="82"/>
        <end position="143"/>
    </location>
</feature>
<feature type="region of interest" description="Disordered" evidence="2">
    <location>
        <begin position="13"/>
        <end position="34"/>
    </location>
</feature>
<feature type="non-terminal residue">
    <location>
        <position position="1"/>
    </location>
</feature>
<feature type="non-terminal residue">
    <location>
        <position position="182"/>
    </location>
</feature>
<geneLocation type="chloroplast"/>
<gene>
    <name type="primary">rps4</name>
</gene>
<name>RR4_IRILU</name>
<reference key="1">
    <citation type="journal article" date="1997" name="Plant Syst. Evol.">
        <title>Phylogenetic analysis of Iridaceae with parsimony and distance methods using the plastid gene rps4.</title>
        <authorList>
            <person name="Souza-Chies T.T."/>
            <person name="Bittar G."/>
            <person name="Nadot S."/>
            <person name="Carter L."/>
            <person name="Besin E."/>
            <person name="Lejeune B.P."/>
        </authorList>
    </citation>
    <scope>NUCLEOTIDE SEQUENCE [GENOMIC DNA]</scope>
</reference>
<keyword id="KW-0150">Chloroplast</keyword>
<keyword id="KW-0934">Plastid</keyword>
<keyword id="KW-0687">Ribonucleoprotein</keyword>
<keyword id="KW-0689">Ribosomal protein</keyword>
<keyword id="KW-0694">RNA-binding</keyword>
<keyword id="KW-0699">rRNA-binding</keyword>
<protein>
    <recommendedName>
        <fullName evidence="3">Small ribosomal subunit protein uS4c</fullName>
    </recommendedName>
    <alternativeName>
        <fullName>30S ribosomal protein S4, chloroplastic</fullName>
    </alternativeName>
</protein>
<comment type="function">
    <text evidence="1">One of the primary rRNA binding proteins, it binds directly to 16S rRNA where it nucleates assembly of the body of the 30S subunit.</text>
</comment>
<comment type="function">
    <text evidence="1">With S5 and S12 plays an important role in translational accuracy.</text>
</comment>
<comment type="subunit">
    <text evidence="1">Part of the 30S ribosomal subunit. Contacts protein S5. The interaction surface between S4 and S5 is involved in control of translational fidelity (By similarity).</text>
</comment>
<comment type="subcellular location">
    <subcellularLocation>
        <location>Plastid</location>
        <location>Chloroplast</location>
    </subcellularLocation>
</comment>
<comment type="similarity">
    <text evidence="3">Belongs to the universal ribosomal protein uS4 family.</text>
</comment>
<evidence type="ECO:0000250" key="1"/>
<evidence type="ECO:0000256" key="2">
    <source>
        <dbReference type="SAM" id="MobiDB-lite"/>
    </source>
</evidence>
<evidence type="ECO:0000305" key="3"/>
<dbReference type="EMBL" id="Z68242">
    <property type="protein sequence ID" value="CAA92540.1"/>
    <property type="molecule type" value="Genomic_DNA"/>
</dbReference>
<dbReference type="SMR" id="O20235"/>
<dbReference type="GO" id="GO:0009507">
    <property type="term" value="C:chloroplast"/>
    <property type="evidence" value="ECO:0007669"/>
    <property type="project" value="UniProtKB-SubCell"/>
</dbReference>
<dbReference type="GO" id="GO:0015935">
    <property type="term" value="C:small ribosomal subunit"/>
    <property type="evidence" value="ECO:0007669"/>
    <property type="project" value="InterPro"/>
</dbReference>
<dbReference type="GO" id="GO:0019843">
    <property type="term" value="F:rRNA binding"/>
    <property type="evidence" value="ECO:0007669"/>
    <property type="project" value="UniProtKB-KW"/>
</dbReference>
<dbReference type="GO" id="GO:0003735">
    <property type="term" value="F:structural constituent of ribosome"/>
    <property type="evidence" value="ECO:0007669"/>
    <property type="project" value="InterPro"/>
</dbReference>
<dbReference type="GO" id="GO:0042274">
    <property type="term" value="P:ribosomal small subunit biogenesis"/>
    <property type="evidence" value="ECO:0007669"/>
    <property type="project" value="TreeGrafter"/>
</dbReference>
<dbReference type="GO" id="GO:0006412">
    <property type="term" value="P:translation"/>
    <property type="evidence" value="ECO:0007669"/>
    <property type="project" value="InterPro"/>
</dbReference>
<dbReference type="CDD" id="cd00165">
    <property type="entry name" value="S4"/>
    <property type="match status" value="1"/>
</dbReference>
<dbReference type="FunFam" id="1.10.1050.10:FF:000002">
    <property type="entry name" value="30S ribosomal protein S4, chloroplastic"/>
    <property type="match status" value="1"/>
</dbReference>
<dbReference type="FunFam" id="3.10.290.10:FF:000081">
    <property type="entry name" value="30S ribosomal protein S4, chloroplastic"/>
    <property type="match status" value="1"/>
</dbReference>
<dbReference type="Gene3D" id="1.10.1050.10">
    <property type="entry name" value="Ribosomal Protein S4 Delta 41, Chain A, domain 1"/>
    <property type="match status" value="1"/>
</dbReference>
<dbReference type="Gene3D" id="3.10.290.10">
    <property type="entry name" value="RNA-binding S4 domain"/>
    <property type="match status" value="1"/>
</dbReference>
<dbReference type="HAMAP" id="MF_01306_B">
    <property type="entry name" value="Ribosomal_uS4_B"/>
    <property type="match status" value="1"/>
</dbReference>
<dbReference type="InterPro" id="IPR022801">
    <property type="entry name" value="Ribosomal_uS4"/>
</dbReference>
<dbReference type="InterPro" id="IPR005709">
    <property type="entry name" value="Ribosomal_uS4_bac-type"/>
</dbReference>
<dbReference type="InterPro" id="IPR018079">
    <property type="entry name" value="Ribosomal_uS4_CS"/>
</dbReference>
<dbReference type="InterPro" id="IPR001912">
    <property type="entry name" value="Ribosomal_uS4_N"/>
</dbReference>
<dbReference type="InterPro" id="IPR002942">
    <property type="entry name" value="S4_RNA-bd"/>
</dbReference>
<dbReference type="InterPro" id="IPR036986">
    <property type="entry name" value="S4_RNA-bd_sf"/>
</dbReference>
<dbReference type="NCBIfam" id="NF003717">
    <property type="entry name" value="PRK05327.1"/>
    <property type="match status" value="1"/>
</dbReference>
<dbReference type="NCBIfam" id="TIGR01017">
    <property type="entry name" value="rpsD_bact"/>
    <property type="match status" value="1"/>
</dbReference>
<dbReference type="PANTHER" id="PTHR11831">
    <property type="entry name" value="30S 40S RIBOSOMAL PROTEIN"/>
    <property type="match status" value="1"/>
</dbReference>
<dbReference type="PANTHER" id="PTHR11831:SF4">
    <property type="entry name" value="SMALL RIBOSOMAL SUBUNIT PROTEIN US4M"/>
    <property type="match status" value="1"/>
</dbReference>
<dbReference type="Pfam" id="PF00163">
    <property type="entry name" value="Ribosomal_S4"/>
    <property type="match status" value="1"/>
</dbReference>
<dbReference type="Pfam" id="PF01479">
    <property type="entry name" value="S4"/>
    <property type="match status" value="1"/>
</dbReference>
<dbReference type="SMART" id="SM01390">
    <property type="entry name" value="Ribosomal_S4"/>
    <property type="match status" value="1"/>
</dbReference>
<dbReference type="SMART" id="SM00363">
    <property type="entry name" value="S4"/>
    <property type="match status" value="1"/>
</dbReference>
<dbReference type="SUPFAM" id="SSF55174">
    <property type="entry name" value="Alpha-L RNA-binding motif"/>
    <property type="match status" value="1"/>
</dbReference>
<dbReference type="PROSITE" id="PS00632">
    <property type="entry name" value="RIBOSOMAL_S4"/>
    <property type="match status" value="1"/>
</dbReference>
<dbReference type="PROSITE" id="PS50889">
    <property type="entry name" value="S4"/>
    <property type="match status" value="1"/>
</dbReference>